<reference key="1">
    <citation type="journal article" date="2002" name="Nature">
        <title>Comparison of the genomes of two Xanthomonas pathogens with differing host specificities.</title>
        <authorList>
            <person name="da Silva A.C.R."/>
            <person name="Ferro J.A."/>
            <person name="Reinach F.C."/>
            <person name="Farah C.S."/>
            <person name="Furlan L.R."/>
            <person name="Quaggio R.B."/>
            <person name="Monteiro-Vitorello C.B."/>
            <person name="Van Sluys M.A."/>
            <person name="Almeida N.F. Jr."/>
            <person name="Alves L.M.C."/>
            <person name="do Amaral A.M."/>
            <person name="Bertolini M.C."/>
            <person name="Camargo L.E.A."/>
            <person name="Camarotte G."/>
            <person name="Cannavan F."/>
            <person name="Cardozo J."/>
            <person name="Chambergo F."/>
            <person name="Ciapina L.P."/>
            <person name="Cicarelli R.M.B."/>
            <person name="Coutinho L.L."/>
            <person name="Cursino-Santos J.R."/>
            <person name="El-Dorry H."/>
            <person name="Faria J.B."/>
            <person name="Ferreira A.J.S."/>
            <person name="Ferreira R.C.C."/>
            <person name="Ferro M.I.T."/>
            <person name="Formighieri E.F."/>
            <person name="Franco M.C."/>
            <person name="Greggio C.C."/>
            <person name="Gruber A."/>
            <person name="Katsuyama A.M."/>
            <person name="Kishi L.T."/>
            <person name="Leite R.P."/>
            <person name="Lemos E.G.M."/>
            <person name="Lemos M.V.F."/>
            <person name="Locali E.C."/>
            <person name="Machado M.A."/>
            <person name="Madeira A.M.B.N."/>
            <person name="Martinez-Rossi N.M."/>
            <person name="Martins E.C."/>
            <person name="Meidanis J."/>
            <person name="Menck C.F.M."/>
            <person name="Miyaki C.Y."/>
            <person name="Moon D.H."/>
            <person name="Moreira L.M."/>
            <person name="Novo M.T.M."/>
            <person name="Okura V.K."/>
            <person name="Oliveira M.C."/>
            <person name="Oliveira V.R."/>
            <person name="Pereira H.A."/>
            <person name="Rossi A."/>
            <person name="Sena J.A.D."/>
            <person name="Silva C."/>
            <person name="de Souza R.F."/>
            <person name="Spinola L.A.F."/>
            <person name="Takita M.A."/>
            <person name="Tamura R.E."/>
            <person name="Teixeira E.C."/>
            <person name="Tezza R.I.D."/>
            <person name="Trindade dos Santos M."/>
            <person name="Truffi D."/>
            <person name="Tsai S.M."/>
            <person name="White F.F."/>
            <person name="Setubal J.C."/>
            <person name="Kitajima J.P."/>
        </authorList>
    </citation>
    <scope>NUCLEOTIDE SEQUENCE [LARGE SCALE GENOMIC DNA]</scope>
    <source>
        <strain>ATCC 33913 / DSM 3586 / NCPPB 528 / LMG 568 / P 25</strain>
    </source>
</reference>
<proteinExistence type="inferred from homology"/>
<name>NFI_XANCP</name>
<feature type="chain" id="PRO_0000159678" description="Endonuclease V">
    <location>
        <begin position="1"/>
        <end position="236"/>
    </location>
</feature>
<feature type="binding site" evidence="1">
    <location>
        <position position="47"/>
    </location>
    <ligand>
        <name>Mg(2+)</name>
        <dbReference type="ChEBI" id="CHEBI:18420"/>
    </ligand>
</feature>
<feature type="binding site" evidence="1">
    <location>
        <position position="115"/>
    </location>
    <ligand>
        <name>Mg(2+)</name>
        <dbReference type="ChEBI" id="CHEBI:18420"/>
    </ligand>
</feature>
<feature type="site" description="Interaction with target DNA" evidence="1">
    <location>
        <position position="85"/>
    </location>
</feature>
<organism>
    <name type="scientific">Xanthomonas campestris pv. campestris (strain ATCC 33913 / DSM 3586 / NCPPB 528 / LMG 568 / P 25)</name>
    <dbReference type="NCBI Taxonomy" id="190485"/>
    <lineage>
        <taxon>Bacteria</taxon>
        <taxon>Pseudomonadati</taxon>
        <taxon>Pseudomonadota</taxon>
        <taxon>Gammaproteobacteria</taxon>
        <taxon>Lysobacterales</taxon>
        <taxon>Lysobacteraceae</taxon>
        <taxon>Xanthomonas</taxon>
    </lineage>
</organism>
<sequence length="236" mass="25452">MQTSIDPVFAGWDGSVAQARQLQQQLAQRVALRDEVSAAPALLAGFDVGFEDDGQTTRAAAVLLDAQTLLPLETHVARVPTSMPYVPGLLSFRELPALLRALALLARTPDLVFIDGQGIAHPRRFGIAAHFGVVTGLPSIGVAKQRLAGTFIEPGGERGDHSPILLAGAQIGWALRSKPRCNPLIVSPGHRVSMQGALDWTLRTLRAYRLPEPTRLADRLASRRGEIELQTQPTLL</sequence>
<comment type="function">
    <text evidence="1">DNA repair enzyme involved in the repair of deaminated bases. Selectively cleaves double-stranded DNA at the second phosphodiester bond 3' to a deoxyinosine leaving behind the intact lesion on the nicked DNA.</text>
</comment>
<comment type="catalytic activity">
    <reaction evidence="1">
        <text>Endonucleolytic cleavage at apurinic or apyrimidinic sites to products with a 5'-phosphate.</text>
        <dbReference type="EC" id="3.1.21.7"/>
    </reaction>
</comment>
<comment type="cofactor">
    <cofactor evidence="1">
        <name>Mg(2+)</name>
        <dbReference type="ChEBI" id="CHEBI:18420"/>
    </cofactor>
</comment>
<comment type="subcellular location">
    <subcellularLocation>
        <location evidence="1">Cytoplasm</location>
    </subcellularLocation>
</comment>
<comment type="similarity">
    <text evidence="1">Belongs to the endonuclease V family.</text>
</comment>
<keyword id="KW-0963">Cytoplasm</keyword>
<keyword id="KW-0227">DNA damage</keyword>
<keyword id="KW-0234">DNA repair</keyword>
<keyword id="KW-0255">Endonuclease</keyword>
<keyword id="KW-0378">Hydrolase</keyword>
<keyword id="KW-0460">Magnesium</keyword>
<keyword id="KW-0479">Metal-binding</keyword>
<keyword id="KW-0540">Nuclease</keyword>
<keyword id="KW-1185">Reference proteome</keyword>
<evidence type="ECO:0000255" key="1">
    <source>
        <dbReference type="HAMAP-Rule" id="MF_00801"/>
    </source>
</evidence>
<dbReference type="EC" id="3.1.21.7" evidence="1"/>
<dbReference type="EMBL" id="AE008922">
    <property type="protein sequence ID" value="AAM41985.1"/>
    <property type="molecule type" value="Genomic_DNA"/>
</dbReference>
<dbReference type="RefSeq" id="NP_638061.1">
    <property type="nucleotide sequence ID" value="NC_003902.1"/>
</dbReference>
<dbReference type="RefSeq" id="WP_011037843.1">
    <property type="nucleotide sequence ID" value="NC_003902.1"/>
</dbReference>
<dbReference type="SMR" id="Q8P7A0"/>
<dbReference type="STRING" id="190485.XCC2713"/>
<dbReference type="DNASU" id="999574"/>
<dbReference type="EnsemblBacteria" id="AAM41985">
    <property type="protein sequence ID" value="AAM41985"/>
    <property type="gene ID" value="XCC2713"/>
</dbReference>
<dbReference type="KEGG" id="xcc:XCC2713"/>
<dbReference type="PATRIC" id="fig|190485.4.peg.2895"/>
<dbReference type="eggNOG" id="COG1515">
    <property type="taxonomic scope" value="Bacteria"/>
</dbReference>
<dbReference type="HOGENOM" id="CLU_047631_1_0_6"/>
<dbReference type="OrthoDB" id="9790916at2"/>
<dbReference type="Proteomes" id="UP000001010">
    <property type="component" value="Chromosome"/>
</dbReference>
<dbReference type="GO" id="GO:0005737">
    <property type="term" value="C:cytoplasm"/>
    <property type="evidence" value="ECO:0007669"/>
    <property type="project" value="UniProtKB-SubCell"/>
</dbReference>
<dbReference type="GO" id="GO:0043737">
    <property type="term" value="F:deoxyribonuclease V activity"/>
    <property type="evidence" value="ECO:0000318"/>
    <property type="project" value="GO_Central"/>
</dbReference>
<dbReference type="GO" id="GO:0000287">
    <property type="term" value="F:magnesium ion binding"/>
    <property type="evidence" value="ECO:0007669"/>
    <property type="project" value="UniProtKB-UniRule"/>
</dbReference>
<dbReference type="GO" id="GO:0016891">
    <property type="term" value="F:RNA endonuclease activity, producing 5'-phosphomonoesters"/>
    <property type="evidence" value="ECO:0000318"/>
    <property type="project" value="GO_Central"/>
</dbReference>
<dbReference type="GO" id="GO:0003727">
    <property type="term" value="F:single-stranded RNA binding"/>
    <property type="evidence" value="ECO:0000318"/>
    <property type="project" value="GO_Central"/>
</dbReference>
<dbReference type="GO" id="GO:0006281">
    <property type="term" value="P:DNA repair"/>
    <property type="evidence" value="ECO:0007669"/>
    <property type="project" value="UniProtKB-UniRule"/>
</dbReference>
<dbReference type="CDD" id="cd06559">
    <property type="entry name" value="Endonuclease_V"/>
    <property type="match status" value="1"/>
</dbReference>
<dbReference type="FunFam" id="3.30.2170.10:FF:000001">
    <property type="entry name" value="Endonuclease V"/>
    <property type="match status" value="1"/>
</dbReference>
<dbReference type="Gene3D" id="3.30.2170.10">
    <property type="entry name" value="archaeoglobus fulgidus dsm 4304 superfamily"/>
    <property type="match status" value="1"/>
</dbReference>
<dbReference type="HAMAP" id="MF_00801">
    <property type="entry name" value="Endonuclease_5"/>
    <property type="match status" value="1"/>
</dbReference>
<dbReference type="InterPro" id="IPR007581">
    <property type="entry name" value="Endonuclease-V"/>
</dbReference>
<dbReference type="NCBIfam" id="NF008629">
    <property type="entry name" value="PRK11617.1"/>
    <property type="match status" value="1"/>
</dbReference>
<dbReference type="PANTHER" id="PTHR28511">
    <property type="entry name" value="ENDONUCLEASE V"/>
    <property type="match status" value="1"/>
</dbReference>
<dbReference type="PANTHER" id="PTHR28511:SF1">
    <property type="entry name" value="ENDONUCLEASE V"/>
    <property type="match status" value="1"/>
</dbReference>
<dbReference type="Pfam" id="PF04493">
    <property type="entry name" value="Endonuclease_5"/>
    <property type="match status" value="1"/>
</dbReference>
<gene>
    <name evidence="1" type="primary">nfi</name>
    <name type="ordered locus">XCC2713</name>
</gene>
<accession>Q8P7A0</accession>
<protein>
    <recommendedName>
        <fullName evidence="1">Endonuclease V</fullName>
        <ecNumber evidence="1">3.1.21.7</ecNumber>
    </recommendedName>
    <alternativeName>
        <fullName evidence="1">Deoxyinosine 3'endonuclease</fullName>
    </alternativeName>
    <alternativeName>
        <fullName evidence="1">Deoxyribonuclease V</fullName>
        <shortName evidence="1">DNase V</shortName>
    </alternativeName>
</protein>